<accession>Q5M648</accession>
<name>RECU_STRT2</name>
<reference key="1">
    <citation type="journal article" date="2004" name="Nat. Biotechnol.">
        <title>Complete sequence and comparative genome analysis of the dairy bacterium Streptococcus thermophilus.</title>
        <authorList>
            <person name="Bolotin A."/>
            <person name="Quinquis B."/>
            <person name="Renault P."/>
            <person name="Sorokin A."/>
            <person name="Ehrlich S.D."/>
            <person name="Kulakauskas S."/>
            <person name="Lapidus A."/>
            <person name="Goltsman E."/>
            <person name="Mazur M."/>
            <person name="Pusch G.D."/>
            <person name="Fonstein M."/>
            <person name="Overbeek R."/>
            <person name="Kyprides N."/>
            <person name="Purnelle B."/>
            <person name="Prozzi D."/>
            <person name="Ngui K."/>
            <person name="Masuy D."/>
            <person name="Hancy F."/>
            <person name="Burteau S."/>
            <person name="Boutry M."/>
            <person name="Delcour J."/>
            <person name="Goffeau A."/>
            <person name="Hols P."/>
        </authorList>
    </citation>
    <scope>NUCLEOTIDE SEQUENCE [LARGE SCALE GENOMIC DNA]</scope>
    <source>
        <strain>ATCC BAA-250 / LMG 18311</strain>
    </source>
</reference>
<sequence length="198" mass="22827">MVNYPHQISRKIAQVRTKKSNRVDFANRGMNFESAINATNDYYLSRGLAVIHKKPTPVQIVKVDYPKRSRAKIVEAYFRQASTTDYSGVYKGYYIDFEAKETRQKTSMPMKNFHAHQIKHMSQVINQDGICFVLLHFSTLKETYLLPAKDLIAFYQIDKGTKSMPLDYIKKRGYAIAESAYPQVPYLEIIEKLLGGNT</sequence>
<organism>
    <name type="scientific">Streptococcus thermophilus (strain ATCC BAA-250 / LMG 18311)</name>
    <dbReference type="NCBI Taxonomy" id="264199"/>
    <lineage>
        <taxon>Bacteria</taxon>
        <taxon>Bacillati</taxon>
        <taxon>Bacillota</taxon>
        <taxon>Bacilli</taxon>
        <taxon>Lactobacillales</taxon>
        <taxon>Streptococcaceae</taxon>
        <taxon>Streptococcus</taxon>
    </lineage>
</organism>
<evidence type="ECO:0000255" key="1">
    <source>
        <dbReference type="HAMAP-Rule" id="MF_00130"/>
    </source>
</evidence>
<dbReference type="EC" id="3.1.21.10" evidence="1"/>
<dbReference type="EMBL" id="CP000023">
    <property type="protein sequence ID" value="AAV59956.1"/>
    <property type="molecule type" value="Genomic_DNA"/>
</dbReference>
<dbReference type="RefSeq" id="WP_002949408.1">
    <property type="nucleotide sequence ID" value="NC_006448.1"/>
</dbReference>
<dbReference type="SMR" id="Q5M648"/>
<dbReference type="STRING" id="264199.stu0231"/>
<dbReference type="GeneID" id="66898162"/>
<dbReference type="KEGG" id="stl:stu0231"/>
<dbReference type="eggNOG" id="COG3331">
    <property type="taxonomic scope" value="Bacteria"/>
</dbReference>
<dbReference type="HOGENOM" id="CLU_096340_0_0_9"/>
<dbReference type="Proteomes" id="UP000001170">
    <property type="component" value="Chromosome"/>
</dbReference>
<dbReference type="GO" id="GO:0005737">
    <property type="term" value="C:cytoplasm"/>
    <property type="evidence" value="ECO:0007669"/>
    <property type="project" value="UniProtKB-SubCell"/>
</dbReference>
<dbReference type="GO" id="GO:0004519">
    <property type="term" value="F:endonuclease activity"/>
    <property type="evidence" value="ECO:0007669"/>
    <property type="project" value="UniProtKB-UniRule"/>
</dbReference>
<dbReference type="GO" id="GO:0000287">
    <property type="term" value="F:magnesium ion binding"/>
    <property type="evidence" value="ECO:0007669"/>
    <property type="project" value="UniProtKB-UniRule"/>
</dbReference>
<dbReference type="GO" id="GO:0003676">
    <property type="term" value="F:nucleic acid binding"/>
    <property type="evidence" value="ECO:0007669"/>
    <property type="project" value="InterPro"/>
</dbReference>
<dbReference type="GO" id="GO:0007059">
    <property type="term" value="P:chromosome segregation"/>
    <property type="evidence" value="ECO:0007669"/>
    <property type="project" value="UniProtKB-UniRule"/>
</dbReference>
<dbReference type="GO" id="GO:0006310">
    <property type="term" value="P:DNA recombination"/>
    <property type="evidence" value="ECO:0007669"/>
    <property type="project" value="UniProtKB-UniRule"/>
</dbReference>
<dbReference type="GO" id="GO:0006281">
    <property type="term" value="P:DNA repair"/>
    <property type="evidence" value="ECO:0007669"/>
    <property type="project" value="UniProtKB-UniRule"/>
</dbReference>
<dbReference type="CDD" id="cd22354">
    <property type="entry name" value="RecU-like"/>
    <property type="match status" value="1"/>
</dbReference>
<dbReference type="Gene3D" id="3.40.1350.10">
    <property type="match status" value="1"/>
</dbReference>
<dbReference type="HAMAP" id="MF_00130">
    <property type="entry name" value="RecU"/>
    <property type="match status" value="1"/>
</dbReference>
<dbReference type="InterPro" id="IPR004612">
    <property type="entry name" value="Resolv_RecU"/>
</dbReference>
<dbReference type="InterPro" id="IPR011335">
    <property type="entry name" value="Restrct_endonuc-II-like"/>
</dbReference>
<dbReference type="InterPro" id="IPR011856">
    <property type="entry name" value="tRNA_endonuc-like_dom_sf"/>
</dbReference>
<dbReference type="NCBIfam" id="NF002580">
    <property type="entry name" value="PRK02234.1-1"/>
    <property type="match status" value="1"/>
</dbReference>
<dbReference type="NCBIfam" id="NF002584">
    <property type="entry name" value="PRK02234.1-5"/>
    <property type="match status" value="1"/>
</dbReference>
<dbReference type="NCBIfam" id="TIGR00648">
    <property type="entry name" value="recU"/>
    <property type="match status" value="1"/>
</dbReference>
<dbReference type="Pfam" id="PF03838">
    <property type="entry name" value="RecU"/>
    <property type="match status" value="1"/>
</dbReference>
<dbReference type="PIRSF" id="PIRSF037785">
    <property type="entry name" value="RecU"/>
    <property type="match status" value="1"/>
</dbReference>
<dbReference type="SUPFAM" id="SSF52980">
    <property type="entry name" value="Restriction endonuclease-like"/>
    <property type="match status" value="1"/>
</dbReference>
<keyword id="KW-0963">Cytoplasm</keyword>
<keyword id="KW-0227">DNA damage</keyword>
<keyword id="KW-0233">DNA recombination</keyword>
<keyword id="KW-0234">DNA repair</keyword>
<keyword id="KW-0255">Endonuclease</keyword>
<keyword id="KW-0378">Hydrolase</keyword>
<keyword id="KW-0460">Magnesium</keyword>
<keyword id="KW-0479">Metal-binding</keyword>
<keyword id="KW-0540">Nuclease</keyword>
<keyword id="KW-1185">Reference proteome</keyword>
<feature type="chain" id="PRO_1000016758" description="Holliday junction resolvase RecU">
    <location>
        <begin position="1"/>
        <end position="198"/>
    </location>
</feature>
<feature type="binding site" evidence="1">
    <location>
        <position position="83"/>
    </location>
    <ligand>
        <name>Mg(2+)</name>
        <dbReference type="ChEBI" id="CHEBI:18420"/>
    </ligand>
</feature>
<feature type="binding site" evidence="1">
    <location>
        <position position="85"/>
    </location>
    <ligand>
        <name>Mg(2+)</name>
        <dbReference type="ChEBI" id="CHEBI:18420"/>
    </ligand>
</feature>
<feature type="binding site" evidence="1">
    <location>
        <position position="98"/>
    </location>
    <ligand>
        <name>Mg(2+)</name>
        <dbReference type="ChEBI" id="CHEBI:18420"/>
    </ligand>
</feature>
<feature type="binding site" evidence="1">
    <location>
        <position position="117"/>
    </location>
    <ligand>
        <name>Mg(2+)</name>
        <dbReference type="ChEBI" id="CHEBI:18420"/>
    </ligand>
</feature>
<feature type="site" description="Transition state stabilizer" evidence="1">
    <location>
        <position position="100"/>
    </location>
</feature>
<proteinExistence type="inferred from homology"/>
<comment type="function">
    <text evidence="1">Endonuclease that resolves Holliday junction intermediates in genetic recombination. Cleaves mobile four-strand junctions by introducing symmetrical nicks in paired strands. Promotes annealing of linear ssDNA with homologous dsDNA. Required for DNA repair, homologous recombination and chromosome segregation.</text>
</comment>
<comment type="catalytic activity">
    <reaction evidence="1">
        <text>Endonucleolytic cleavage at a junction such as a reciprocal single-stranded crossover between two homologous DNA duplexes (Holliday junction).</text>
        <dbReference type="EC" id="3.1.21.10"/>
    </reaction>
</comment>
<comment type="cofactor">
    <cofactor evidence="1">
        <name>Mg(2+)</name>
        <dbReference type="ChEBI" id="CHEBI:18420"/>
    </cofactor>
    <text evidence="1">Binds 1 Mg(2+) ion per subunit.</text>
</comment>
<comment type="subcellular location">
    <subcellularLocation>
        <location evidence="1">Cytoplasm</location>
    </subcellularLocation>
</comment>
<comment type="similarity">
    <text evidence="1">Belongs to the RecU family.</text>
</comment>
<protein>
    <recommendedName>
        <fullName evidence="1">Holliday junction resolvase RecU</fullName>
        <ecNumber evidence="1">3.1.21.10</ecNumber>
    </recommendedName>
    <alternativeName>
        <fullName evidence="1">Recombination protein U homolog</fullName>
    </alternativeName>
</protein>
<gene>
    <name evidence="1" type="primary">recU</name>
    <name type="ordered locus">stu0231</name>
</gene>